<feature type="chain" id="PRO_0000241560" description="Large ribosomal subunit protein uL24">
    <location>
        <begin position="1"/>
        <end position="115"/>
    </location>
</feature>
<accession>Q2NIW5</accession>
<evidence type="ECO:0000255" key="1">
    <source>
        <dbReference type="HAMAP-Rule" id="MF_01326"/>
    </source>
</evidence>
<evidence type="ECO:0000305" key="2"/>
<sequence>MRIKVGETVAILAGKDRFVTDESGKKMIKTGKVLKVFAKTQKIIVEGVNIKTKHQPPSQNEEKGAIVKQEAPIHVSNVALVDPQTQTSTKVGIRIQSGKKVRYAKKSNQTLDEKN</sequence>
<gene>
    <name evidence="1" type="primary">rplX</name>
    <name type="ordered locus">AYWB_511</name>
</gene>
<protein>
    <recommendedName>
        <fullName evidence="1">Large ribosomal subunit protein uL24</fullName>
    </recommendedName>
    <alternativeName>
        <fullName evidence="2">50S ribosomal protein L24</fullName>
    </alternativeName>
</protein>
<proteinExistence type="inferred from homology"/>
<keyword id="KW-0687">Ribonucleoprotein</keyword>
<keyword id="KW-0689">Ribosomal protein</keyword>
<keyword id="KW-0694">RNA-binding</keyword>
<keyword id="KW-0699">rRNA-binding</keyword>
<organism>
    <name type="scientific">Aster yellows witches'-broom phytoplasma (strain AYWB)</name>
    <dbReference type="NCBI Taxonomy" id="322098"/>
    <lineage>
        <taxon>Bacteria</taxon>
        <taxon>Bacillati</taxon>
        <taxon>Mycoplasmatota</taxon>
        <taxon>Mollicutes</taxon>
        <taxon>Acholeplasmatales</taxon>
        <taxon>Acholeplasmataceae</taxon>
        <taxon>Candidatus Phytoplasma</taxon>
        <taxon>16SrI (Aster yellows group)</taxon>
    </lineage>
</organism>
<name>RL24_AYWBP</name>
<reference key="1">
    <citation type="journal article" date="2006" name="J. Bacteriol.">
        <title>Living with genome instability: the adaptation of phytoplasmas to diverse environments of their insect and plant hosts.</title>
        <authorList>
            <person name="Bai X."/>
            <person name="Zhang J."/>
            <person name="Ewing A."/>
            <person name="Miller S.A."/>
            <person name="Jancso Radek A."/>
            <person name="Shevchenko D.V."/>
            <person name="Tsukerman K."/>
            <person name="Walunas T."/>
            <person name="Lapidus A."/>
            <person name="Campbell J.W."/>
            <person name="Hogenhout S.A."/>
        </authorList>
    </citation>
    <scope>NUCLEOTIDE SEQUENCE [LARGE SCALE GENOMIC DNA]</scope>
    <source>
        <strain>AYWB</strain>
    </source>
</reference>
<comment type="function">
    <text evidence="1">One of two assembly initiator proteins, it binds directly to the 5'-end of the 23S rRNA, where it nucleates assembly of the 50S subunit.</text>
</comment>
<comment type="function">
    <text evidence="1">One of the proteins that surrounds the polypeptide exit tunnel on the outside of the subunit.</text>
</comment>
<comment type="subunit">
    <text evidence="1">Part of the 50S ribosomal subunit.</text>
</comment>
<comment type="similarity">
    <text evidence="1">Belongs to the universal ribosomal protein uL24 family.</text>
</comment>
<dbReference type="EMBL" id="CP000061">
    <property type="protein sequence ID" value="ABC65628.1"/>
    <property type="molecule type" value="Genomic_DNA"/>
</dbReference>
<dbReference type="RefSeq" id="WP_011412790.1">
    <property type="nucleotide sequence ID" value="NC_007716.1"/>
</dbReference>
<dbReference type="SMR" id="Q2NIW5"/>
<dbReference type="STRING" id="322098.AYWB_511"/>
<dbReference type="KEGG" id="ayw:AYWB_511"/>
<dbReference type="eggNOG" id="COG0198">
    <property type="taxonomic scope" value="Bacteria"/>
</dbReference>
<dbReference type="HOGENOM" id="CLU_093315_2_0_14"/>
<dbReference type="OrthoDB" id="9807419at2"/>
<dbReference type="PhylomeDB" id="Q2NIW5"/>
<dbReference type="Proteomes" id="UP000001934">
    <property type="component" value="Chromosome"/>
</dbReference>
<dbReference type="GO" id="GO:1990904">
    <property type="term" value="C:ribonucleoprotein complex"/>
    <property type="evidence" value="ECO:0007669"/>
    <property type="project" value="UniProtKB-KW"/>
</dbReference>
<dbReference type="GO" id="GO:0005840">
    <property type="term" value="C:ribosome"/>
    <property type="evidence" value="ECO:0007669"/>
    <property type="project" value="UniProtKB-KW"/>
</dbReference>
<dbReference type="GO" id="GO:0019843">
    <property type="term" value="F:rRNA binding"/>
    <property type="evidence" value="ECO:0007669"/>
    <property type="project" value="UniProtKB-UniRule"/>
</dbReference>
<dbReference type="GO" id="GO:0003735">
    <property type="term" value="F:structural constituent of ribosome"/>
    <property type="evidence" value="ECO:0007669"/>
    <property type="project" value="InterPro"/>
</dbReference>
<dbReference type="GO" id="GO:0006412">
    <property type="term" value="P:translation"/>
    <property type="evidence" value="ECO:0007669"/>
    <property type="project" value="UniProtKB-UniRule"/>
</dbReference>
<dbReference type="CDD" id="cd06089">
    <property type="entry name" value="KOW_RPL26"/>
    <property type="match status" value="1"/>
</dbReference>
<dbReference type="Gene3D" id="2.30.30.30">
    <property type="match status" value="1"/>
</dbReference>
<dbReference type="HAMAP" id="MF_01326_B">
    <property type="entry name" value="Ribosomal_uL24_B"/>
    <property type="match status" value="1"/>
</dbReference>
<dbReference type="InterPro" id="IPR014722">
    <property type="entry name" value="Rib_uL2_dom2"/>
</dbReference>
<dbReference type="InterPro" id="IPR003256">
    <property type="entry name" value="Ribosomal_uL24"/>
</dbReference>
<dbReference type="InterPro" id="IPR041988">
    <property type="entry name" value="Ribosomal_uL24_KOW"/>
</dbReference>
<dbReference type="InterPro" id="IPR008991">
    <property type="entry name" value="Translation_prot_SH3-like_sf"/>
</dbReference>
<dbReference type="NCBIfam" id="TIGR01079">
    <property type="entry name" value="rplX_bact"/>
    <property type="match status" value="1"/>
</dbReference>
<dbReference type="PANTHER" id="PTHR12903">
    <property type="entry name" value="MITOCHONDRIAL RIBOSOMAL PROTEIN L24"/>
    <property type="match status" value="1"/>
</dbReference>
<dbReference type="Pfam" id="PF17136">
    <property type="entry name" value="ribosomal_L24"/>
    <property type="match status" value="1"/>
</dbReference>
<dbReference type="SUPFAM" id="SSF50104">
    <property type="entry name" value="Translation proteins SH3-like domain"/>
    <property type="match status" value="1"/>
</dbReference>